<proteinExistence type="evidence at transcript level"/>
<protein>
    <recommendedName>
        <fullName evidence="3">Secreted RxLR effector protein RXLR-C09</fullName>
    </recommendedName>
</protein>
<reference key="1">
    <citation type="journal article" date="2015" name="BMC Genomics">
        <title>Genome analyses of the sunflower pathogen Plasmopara halstedii provide insights into effector evolution in downy mildews and Phytophthora.</title>
        <authorList>
            <person name="Sharma R."/>
            <person name="Xia X."/>
            <person name="Cano L.M."/>
            <person name="Evangelisti E."/>
            <person name="Kemen E."/>
            <person name="Judelson H."/>
            <person name="Oome S."/>
            <person name="Sambles C."/>
            <person name="van den Hoogen D.J."/>
            <person name="Kitner M."/>
            <person name="Klein J."/>
            <person name="Meijer H.J."/>
            <person name="Spring O."/>
            <person name="Win J."/>
            <person name="Zipper R."/>
            <person name="Bode H.B."/>
            <person name="Govers F."/>
            <person name="Kamoun S."/>
            <person name="Schornack S."/>
            <person name="Studholme D.J."/>
            <person name="Van den Ackerveken G."/>
            <person name="Thines M."/>
        </authorList>
    </citation>
    <scope>NUCLEOTIDE SEQUENCE [LARGE SCALE GENOMIC DNA]</scope>
</reference>
<reference key="2">
    <citation type="journal article" date="2019" name="Plant J.">
        <title>Sunflower resistance to multiple downy mildew pathotypes revealed by recognition of conserved effectors of the oomycete Plasmopara halstedii.</title>
        <authorList>
            <person name="Pecrix Y."/>
            <person name="Buendia L."/>
            <person name="Penouilh-Suzette C."/>
            <person name="Marechaux M."/>
            <person name="Legrand L."/>
            <person name="Bouchez O."/>
            <person name="Rengel D."/>
            <person name="Gouzy J."/>
            <person name="Cottret L."/>
            <person name="Vear F."/>
            <person name="Godiard L."/>
        </authorList>
    </citation>
    <scope>DOMAIN</scope>
    <scope>INDUCTION</scope>
    <scope>FUNCTION</scope>
    <scope>SUBCELLULAR LOCATION</scope>
</reference>
<evidence type="ECO:0000255" key="1"/>
<evidence type="ECO:0000269" key="2">
    <source>
    </source>
</evidence>
<evidence type="ECO:0000303" key="3">
    <source>
    </source>
</evidence>
<evidence type="ECO:0000305" key="4"/>
<evidence type="ECO:0000305" key="5">
    <source>
    </source>
</evidence>
<organism>
    <name type="scientific">Plasmopara halstedii</name>
    <name type="common">Downy mildew of sunflower</name>
    <dbReference type="NCBI Taxonomy" id="4781"/>
    <lineage>
        <taxon>Eukaryota</taxon>
        <taxon>Sar</taxon>
        <taxon>Stramenopiles</taxon>
        <taxon>Oomycota</taxon>
        <taxon>Peronosporales</taxon>
        <taxon>Peronosporaceae</taxon>
        <taxon>Plasmopara</taxon>
    </lineage>
</organism>
<comment type="function">
    <text evidence="2">Secreted effector that suppresses pattern-triggered immunity (PTI) in plant host.</text>
</comment>
<comment type="subcellular location">
    <subcellularLocation>
        <location evidence="2">Secreted</location>
    </subcellularLocation>
    <subcellularLocation>
        <location evidence="2">Host cell membrane</location>
    </subcellularLocation>
    <subcellularLocation>
        <location evidence="2">Host nucleus</location>
    </subcellularLocation>
</comment>
<comment type="induction">
    <text evidence="2">Expression is up-regulated during the early plant infection stages.</text>
</comment>
<comment type="domain">
    <text evidence="5">The RxLR-dEER motif acts to carry the protein into the host cell cytoplasm through binding to cell surface phosphatidylinositol-3-phosphate.</text>
</comment>
<comment type="similarity">
    <text evidence="4">Belongs to the RxLR effector family.</text>
</comment>
<sequence>MRFCLVFIRLAAFVILSGGATSTTTDNDDTRLLQTSNIETAAVANVLHVMQSSESSKRLLRLNDQADISGHDEERSSLIEKGWKKLRKLIKKVWKYVKKPFKKTAKIIKKPFKSRTKNIHIVYYKSRF</sequence>
<feature type="signal peptide" evidence="1">
    <location>
        <begin position="1"/>
        <end position="22"/>
    </location>
</feature>
<feature type="chain" id="PRO_5006058450" description="Secreted RxLR effector protein RXLR-C09">
    <location>
        <begin position="23"/>
        <end position="128"/>
    </location>
</feature>
<feature type="short sequence motif" description="RxLR-dEER" evidence="5">
    <location>
        <begin position="58"/>
        <end position="75"/>
    </location>
</feature>
<gene>
    <name evidence="3" type="primary">RXLR-C09</name>
</gene>
<dbReference type="EMBL" id="CCYD01000246">
    <property type="protein sequence ID" value="CEG36780.1"/>
    <property type="molecule type" value="Genomic_DNA"/>
</dbReference>
<dbReference type="SMR" id="A0A0P1A8B0"/>
<dbReference type="EnsemblProtists" id="CEG36780">
    <property type="protein sequence ID" value="CEG36780"/>
    <property type="gene ID" value="CEG36780"/>
</dbReference>
<dbReference type="Proteomes" id="UP000054928">
    <property type="component" value="Unassembled WGS sequence"/>
</dbReference>
<dbReference type="GO" id="GO:0005576">
    <property type="term" value="C:extracellular region"/>
    <property type="evidence" value="ECO:0007669"/>
    <property type="project" value="UniProtKB-SubCell"/>
</dbReference>
<dbReference type="GO" id="GO:0042025">
    <property type="term" value="C:host cell nucleus"/>
    <property type="evidence" value="ECO:0007669"/>
    <property type="project" value="UniProtKB-SubCell"/>
</dbReference>
<dbReference type="GO" id="GO:0020002">
    <property type="term" value="C:host cell plasma membrane"/>
    <property type="evidence" value="ECO:0007669"/>
    <property type="project" value="UniProtKB-SubCell"/>
</dbReference>
<dbReference type="GO" id="GO:0016020">
    <property type="term" value="C:membrane"/>
    <property type="evidence" value="ECO:0007669"/>
    <property type="project" value="UniProtKB-KW"/>
</dbReference>
<keyword id="KW-1032">Host cell membrane</keyword>
<keyword id="KW-1043">Host membrane</keyword>
<keyword id="KW-1048">Host nucleus</keyword>
<keyword id="KW-0472">Membrane</keyword>
<keyword id="KW-1185">Reference proteome</keyword>
<keyword id="KW-0964">Secreted</keyword>
<keyword id="KW-0732">Signal</keyword>
<keyword id="KW-0843">Virulence</keyword>
<name>RLR09_PLAHL</name>
<accession>A0A0P1A8B0</accession>